<feature type="initiator methionine" description="Removed" evidence="1">
    <location>
        <position position="1"/>
    </location>
</feature>
<feature type="chain" id="PRO_0000359661" description="Photosystem II D2 protein">
    <location>
        <begin position="2"/>
        <end position="353"/>
    </location>
</feature>
<feature type="transmembrane region" description="Helical" evidence="2">
    <location>
        <begin position="41"/>
        <end position="61"/>
    </location>
</feature>
<feature type="transmembrane region" description="Helical" evidence="2">
    <location>
        <begin position="125"/>
        <end position="141"/>
    </location>
</feature>
<feature type="transmembrane region" description="Helical" evidence="2">
    <location>
        <begin position="153"/>
        <end position="166"/>
    </location>
</feature>
<feature type="transmembrane region" description="Helical" evidence="2">
    <location>
        <begin position="208"/>
        <end position="228"/>
    </location>
</feature>
<feature type="transmembrane region" description="Helical" evidence="2">
    <location>
        <begin position="279"/>
        <end position="295"/>
    </location>
</feature>
<feature type="binding site" description="axial binding residue" evidence="2">
    <location>
        <position position="118"/>
    </location>
    <ligand>
        <name>chlorophyll a</name>
        <dbReference type="ChEBI" id="CHEBI:58416"/>
        <label>ChlzD2</label>
    </ligand>
    <ligandPart>
        <name>Mg</name>
        <dbReference type="ChEBI" id="CHEBI:25107"/>
    </ligandPart>
</feature>
<feature type="binding site" evidence="2">
    <location>
        <position position="130"/>
    </location>
    <ligand>
        <name>pheophytin a</name>
        <dbReference type="ChEBI" id="CHEBI:136840"/>
        <label>D2</label>
    </ligand>
</feature>
<feature type="binding site" evidence="2">
    <location>
        <position position="143"/>
    </location>
    <ligand>
        <name>pheophytin a</name>
        <dbReference type="ChEBI" id="CHEBI:136840"/>
        <label>D2</label>
    </ligand>
</feature>
<feature type="binding site" description="axial binding residue" evidence="2">
    <location>
        <position position="198"/>
    </location>
    <ligand>
        <name>chlorophyll a</name>
        <dbReference type="ChEBI" id="CHEBI:58416"/>
        <label>PD2</label>
    </ligand>
    <ligandPart>
        <name>Mg</name>
        <dbReference type="ChEBI" id="CHEBI:25107"/>
    </ligandPart>
</feature>
<feature type="binding site" evidence="2">
    <location>
        <position position="215"/>
    </location>
    <ligand>
        <name>a plastoquinone</name>
        <dbReference type="ChEBI" id="CHEBI:17757"/>
        <label>Q(A)</label>
    </ligand>
</feature>
<feature type="binding site" evidence="2">
    <location>
        <position position="215"/>
    </location>
    <ligand>
        <name>Fe cation</name>
        <dbReference type="ChEBI" id="CHEBI:24875"/>
        <note>ligand shared with heterodimeric partner</note>
    </ligand>
</feature>
<feature type="binding site" evidence="2">
    <location>
        <position position="262"/>
    </location>
    <ligand>
        <name>a plastoquinone</name>
        <dbReference type="ChEBI" id="CHEBI:17757"/>
        <label>Q(A)</label>
    </ligand>
</feature>
<feature type="binding site" evidence="2">
    <location>
        <position position="269"/>
    </location>
    <ligand>
        <name>Fe cation</name>
        <dbReference type="ChEBI" id="CHEBI:24875"/>
        <note>ligand shared with heterodimeric partner</note>
    </ligand>
</feature>
<feature type="modified residue" description="N-acetylthreonine" evidence="1">
    <location>
        <position position="2"/>
    </location>
</feature>
<feature type="modified residue" description="Phosphothreonine" evidence="1">
    <location>
        <position position="2"/>
    </location>
</feature>
<geneLocation type="chloroplast"/>
<sequence>MTIALGRFTKEENDLFDIMDDWLRRDRFVFVGWSGLLLFPCAYFALGGWFTGTTFVTSWYTHGLASSYLEGCNFLTAAVSTPANSLAHSLLLLWGPEAQGDFTRWCQLGGLWTFVALHGAFALIGFMLRQFELARSVQLRPYNAIAFSGPIAVFVSVFLIYPLGQSGWFFAPSFGVAAIFRFILFFQGFHNWTLNPFHMMGVAGVLGAALLCAIHGATVENTLFEDGDGANTFRAFNPTQAEETYSMVTANRFWSQIFGVAFSNKRWLHFFMLFVPVTGLWMSALGVVGLALNLRAYDFVSQEIRAAEDPEFETFYTKNILLNEGIRAWMAAQDQPHENLIFPEEVLPRGNAL</sequence>
<comment type="function">
    <text evidence="2">Photosystem II (PSII) is a light-driven water:plastoquinone oxidoreductase that uses light energy to abstract electrons from H(2)O, generating O(2) and a proton gradient subsequently used for ATP formation. It consists of a core antenna complex that captures photons, and an electron transfer chain that converts photonic excitation into a charge separation. The D1/D2 (PsbA/PsbD) reaction center heterodimer binds P680, the primary electron donor of PSII as well as several subsequent electron acceptors. D2 is needed for assembly of a stable PSII complex.</text>
</comment>
<comment type="catalytic activity">
    <reaction evidence="2">
        <text>2 a plastoquinone + 4 hnu + 2 H2O = 2 a plastoquinol + O2</text>
        <dbReference type="Rhea" id="RHEA:36359"/>
        <dbReference type="Rhea" id="RHEA-COMP:9561"/>
        <dbReference type="Rhea" id="RHEA-COMP:9562"/>
        <dbReference type="ChEBI" id="CHEBI:15377"/>
        <dbReference type="ChEBI" id="CHEBI:15379"/>
        <dbReference type="ChEBI" id="CHEBI:17757"/>
        <dbReference type="ChEBI" id="CHEBI:30212"/>
        <dbReference type="ChEBI" id="CHEBI:62192"/>
        <dbReference type="EC" id="1.10.3.9"/>
    </reaction>
</comment>
<comment type="cofactor">
    <text evidence="2">The D1/D2 heterodimer binds P680, chlorophylls that are the primary electron donor of PSII, and subsequent electron acceptors. It shares a non-heme iron and each subunit binds pheophytin, quinone, additional chlorophylls, carotenoids and lipids. There is also a Cl(-1) ion associated with D1 and D2, which is required for oxygen evolution. The PSII complex binds additional chlorophylls, carotenoids and specific lipids.</text>
</comment>
<comment type="subunit">
    <text evidence="2">PSII is composed of 1 copy each of membrane proteins PsbA, PsbB, PsbC, PsbD, PsbE, PsbF, PsbH, PsbI, PsbJ, PsbK, PsbL, PsbM, PsbT, PsbX, PsbY, PsbZ, Psb30/Ycf12, at least 3 peripheral proteins of the oxygen-evolving complex and a large number of cofactors. It forms dimeric complexes.</text>
</comment>
<comment type="subcellular location">
    <subcellularLocation>
        <location evidence="2">Plastid</location>
        <location evidence="2">Chloroplast thylakoid membrane</location>
        <topology evidence="2">Multi-pass membrane protein</topology>
    </subcellularLocation>
</comment>
<comment type="miscellaneous">
    <text evidence="2">2 of the reaction center chlorophylls (ChlD1 and ChlD2) are entirely coordinated by water.</text>
</comment>
<comment type="similarity">
    <text evidence="2">Belongs to the reaction center PufL/M/PsbA/D family.</text>
</comment>
<proteinExistence type="inferred from homology"/>
<accession>A9L991</accession>
<gene>
    <name evidence="2" type="primary">psbD</name>
</gene>
<reference key="1">
    <citation type="journal article" date="2008" name="J. Mol. Evol.">
        <title>Complete sequence of the Duckweed (Lemna minor) chloroplast genome: structural organization and phylogenetic relationships to other angiosperms.</title>
        <authorList>
            <person name="Mardanov A.V."/>
            <person name="Ravin N.V."/>
            <person name="Kuznetsov B.B."/>
            <person name="Samigullin T.H."/>
            <person name="Antonov A.S."/>
            <person name="Kolganova T.V."/>
            <person name="Skyabin K.G."/>
        </authorList>
    </citation>
    <scope>NUCLEOTIDE SEQUENCE [LARGE SCALE GENOMIC DNA]</scope>
</reference>
<keyword id="KW-0007">Acetylation</keyword>
<keyword id="KW-0148">Chlorophyll</keyword>
<keyword id="KW-0150">Chloroplast</keyword>
<keyword id="KW-0157">Chromophore</keyword>
<keyword id="KW-0249">Electron transport</keyword>
<keyword id="KW-0408">Iron</keyword>
<keyword id="KW-0460">Magnesium</keyword>
<keyword id="KW-0472">Membrane</keyword>
<keyword id="KW-0479">Metal-binding</keyword>
<keyword id="KW-0560">Oxidoreductase</keyword>
<keyword id="KW-0597">Phosphoprotein</keyword>
<keyword id="KW-0602">Photosynthesis</keyword>
<keyword id="KW-0604">Photosystem II</keyword>
<keyword id="KW-0934">Plastid</keyword>
<keyword id="KW-0793">Thylakoid</keyword>
<keyword id="KW-0812">Transmembrane</keyword>
<keyword id="KW-1133">Transmembrane helix</keyword>
<keyword id="KW-0813">Transport</keyword>
<evidence type="ECO:0000250" key="1">
    <source>
        <dbReference type="UniProtKB" id="P56761"/>
    </source>
</evidence>
<evidence type="ECO:0000255" key="2">
    <source>
        <dbReference type="HAMAP-Rule" id="MF_01383"/>
    </source>
</evidence>
<dbReference type="EC" id="1.10.3.9" evidence="2"/>
<dbReference type="EMBL" id="DQ400350">
    <property type="protein sequence ID" value="ABD48490.1"/>
    <property type="molecule type" value="Genomic_DNA"/>
</dbReference>
<dbReference type="RefSeq" id="YP_001595503.1">
    <property type="nucleotide sequence ID" value="NC_010109.1"/>
</dbReference>
<dbReference type="SMR" id="A9L991"/>
<dbReference type="GeneID" id="5787537"/>
<dbReference type="GO" id="GO:0009535">
    <property type="term" value="C:chloroplast thylakoid membrane"/>
    <property type="evidence" value="ECO:0007669"/>
    <property type="project" value="UniProtKB-SubCell"/>
</dbReference>
<dbReference type="GO" id="GO:0009523">
    <property type="term" value="C:photosystem II"/>
    <property type="evidence" value="ECO:0007669"/>
    <property type="project" value="UniProtKB-KW"/>
</dbReference>
<dbReference type="GO" id="GO:0016168">
    <property type="term" value="F:chlorophyll binding"/>
    <property type="evidence" value="ECO:0007669"/>
    <property type="project" value="UniProtKB-UniRule"/>
</dbReference>
<dbReference type="GO" id="GO:0045156">
    <property type="term" value="F:electron transporter, transferring electrons within the cyclic electron transport pathway of photosynthesis activity"/>
    <property type="evidence" value="ECO:0007669"/>
    <property type="project" value="InterPro"/>
</dbReference>
<dbReference type="GO" id="GO:0005506">
    <property type="term" value="F:iron ion binding"/>
    <property type="evidence" value="ECO:0007669"/>
    <property type="project" value="UniProtKB-UniRule"/>
</dbReference>
<dbReference type="GO" id="GO:0010242">
    <property type="term" value="F:oxygen evolving activity"/>
    <property type="evidence" value="ECO:0007669"/>
    <property type="project" value="UniProtKB-EC"/>
</dbReference>
<dbReference type="GO" id="GO:0009772">
    <property type="term" value="P:photosynthetic electron transport in photosystem II"/>
    <property type="evidence" value="ECO:0007669"/>
    <property type="project" value="InterPro"/>
</dbReference>
<dbReference type="CDD" id="cd09288">
    <property type="entry name" value="Photosystem-II_D2"/>
    <property type="match status" value="1"/>
</dbReference>
<dbReference type="FunFam" id="1.20.85.10:FF:000001">
    <property type="entry name" value="photosystem II D2 protein-like"/>
    <property type="match status" value="1"/>
</dbReference>
<dbReference type="Gene3D" id="1.20.85.10">
    <property type="entry name" value="Photosystem II protein D1-like"/>
    <property type="match status" value="1"/>
</dbReference>
<dbReference type="HAMAP" id="MF_01383">
    <property type="entry name" value="PSII_PsbD_D2"/>
    <property type="match status" value="1"/>
</dbReference>
<dbReference type="InterPro" id="IPR055266">
    <property type="entry name" value="D1/D2"/>
</dbReference>
<dbReference type="InterPro" id="IPR036854">
    <property type="entry name" value="Photo_II_D1/D2_sf"/>
</dbReference>
<dbReference type="InterPro" id="IPR000484">
    <property type="entry name" value="Photo_RC_L/M"/>
</dbReference>
<dbReference type="InterPro" id="IPR055265">
    <property type="entry name" value="Photo_RC_L/M_CS"/>
</dbReference>
<dbReference type="InterPro" id="IPR005868">
    <property type="entry name" value="PSII_PsbD/D2"/>
</dbReference>
<dbReference type="NCBIfam" id="TIGR01152">
    <property type="entry name" value="psbD"/>
    <property type="match status" value="1"/>
</dbReference>
<dbReference type="PANTHER" id="PTHR33149:SF12">
    <property type="entry name" value="PHOTOSYSTEM II D2 PROTEIN"/>
    <property type="match status" value="1"/>
</dbReference>
<dbReference type="PANTHER" id="PTHR33149">
    <property type="entry name" value="PHOTOSYSTEM II PROTEIN D1"/>
    <property type="match status" value="1"/>
</dbReference>
<dbReference type="Pfam" id="PF00124">
    <property type="entry name" value="Photo_RC"/>
    <property type="match status" value="1"/>
</dbReference>
<dbReference type="PRINTS" id="PR00256">
    <property type="entry name" value="REACTNCENTRE"/>
</dbReference>
<dbReference type="SUPFAM" id="SSF81483">
    <property type="entry name" value="Bacterial photosystem II reaction centre, L and M subunits"/>
    <property type="match status" value="1"/>
</dbReference>
<dbReference type="PROSITE" id="PS00244">
    <property type="entry name" value="REACTION_CENTER"/>
    <property type="match status" value="1"/>
</dbReference>
<protein>
    <recommendedName>
        <fullName evidence="2">Photosystem II D2 protein</fullName>
        <shortName evidence="2">PSII D2 protein</shortName>
        <ecNumber evidence="2">1.10.3.9</ecNumber>
    </recommendedName>
    <alternativeName>
        <fullName evidence="2">Photosystem Q(A) protein</fullName>
    </alternativeName>
</protein>
<organism>
    <name type="scientific">Lemna minor</name>
    <name type="common">Common duckweed</name>
    <dbReference type="NCBI Taxonomy" id="4472"/>
    <lineage>
        <taxon>Eukaryota</taxon>
        <taxon>Viridiplantae</taxon>
        <taxon>Streptophyta</taxon>
        <taxon>Embryophyta</taxon>
        <taxon>Tracheophyta</taxon>
        <taxon>Spermatophyta</taxon>
        <taxon>Magnoliopsida</taxon>
        <taxon>Liliopsida</taxon>
        <taxon>Araceae</taxon>
        <taxon>Lemnoideae</taxon>
        <taxon>Lemna</taxon>
    </lineage>
</organism>
<name>PSBD_LEMMI</name>